<gene>
    <name type="primary">Timm13</name>
    <name type="synonym">Tim13a</name>
    <name type="synonym">Timm13a</name>
</gene>
<proteinExistence type="evidence at protein level"/>
<organism>
    <name type="scientific">Mus musculus</name>
    <name type="common">Mouse</name>
    <dbReference type="NCBI Taxonomy" id="10090"/>
    <lineage>
        <taxon>Eukaryota</taxon>
        <taxon>Metazoa</taxon>
        <taxon>Chordata</taxon>
        <taxon>Craniata</taxon>
        <taxon>Vertebrata</taxon>
        <taxon>Euteleostomi</taxon>
        <taxon>Mammalia</taxon>
        <taxon>Eutheria</taxon>
        <taxon>Euarchontoglires</taxon>
        <taxon>Glires</taxon>
        <taxon>Rodentia</taxon>
        <taxon>Myomorpha</taxon>
        <taxon>Muroidea</taxon>
        <taxon>Muridae</taxon>
        <taxon>Murinae</taxon>
        <taxon>Mus</taxon>
        <taxon>Mus</taxon>
    </lineage>
</organism>
<evidence type="ECO:0000250" key="1"/>
<evidence type="ECO:0000250" key="2">
    <source>
        <dbReference type="UniProtKB" id="Q9Y5L4"/>
    </source>
</evidence>
<evidence type="ECO:0000269" key="3">
    <source>
    </source>
</evidence>
<evidence type="ECO:0000305" key="4"/>
<evidence type="ECO:0007744" key="5">
    <source>
    </source>
</evidence>
<comment type="function">
    <text evidence="1">Mitochondrial intermembrane chaperone that participates in the import and insertion of some multi-pass transmembrane proteins into the mitochondrial inner membrane. Also required for the transfer of beta-barrel precursors from the TOM complex to the sorting and assembly machinery (SAM complex) of the outer membrane. Acts as a chaperone-like protein that protects the hydrophobic precursors from aggregation and guide them through the mitochondrial intermembrane space. The TIMM8-TIMM13 complex mediates the import of proteins such as TIMM23, SLC25A12/ARALAR1 and SLC25A13/ARALAR2, while the predominant TIMM9-TIMM10 70 kDa complex mediates the import of much more proteins (By similarity).</text>
</comment>
<comment type="subunit">
    <text evidence="1">Heterohexamer; composed of 3 copies of TIMM8 (TIMM8A or TIMM8B) and 3 copies of TIMM13, named soluble 70 kDa complex. Associates with the TIM22 complex, whose core is composed of TIMM22 (By similarity).</text>
</comment>
<comment type="subcellular location">
    <subcellularLocation>
        <location evidence="1">Mitochondrion inner membrane</location>
        <topology evidence="1">Peripheral membrane protein</topology>
        <orientation evidence="1">Intermembrane side</orientation>
    </subcellularLocation>
</comment>
<comment type="tissue specificity">
    <text evidence="3">Present at high level in liver and brain, and at lower level in muscle and heart. In CNS sections, it is predominantly present in the soma and the dendritic portion of the Purkinje cells of the cerebellum, but not in the glial cells. Scattered expression also is also detected in the brain stem, olfactory bulb, substantia nigra, hippocampus and striatum (at protein level).</text>
</comment>
<comment type="domain">
    <text evidence="1">The twin CX3C motif contains 4 conserved Cys residues that form 2 disulfide bonds in the mitochondrial intermembrane space. However, during the transit of TIMM13 from cytoplasm into mitochondrion, the Cys residues probably coordinate zinc, thereby preventing folding and allowing its transfer across mitochondrial outer membrane (By similarity).</text>
</comment>
<comment type="similarity">
    <text evidence="4">Belongs to the small Tim family.</text>
</comment>
<keyword id="KW-0007">Acetylation</keyword>
<keyword id="KW-0143">Chaperone</keyword>
<keyword id="KW-0903">Direct protein sequencing</keyword>
<keyword id="KW-1015">Disulfide bond</keyword>
<keyword id="KW-0472">Membrane</keyword>
<keyword id="KW-0479">Metal-binding</keyword>
<keyword id="KW-0496">Mitochondrion</keyword>
<keyword id="KW-0999">Mitochondrion inner membrane</keyword>
<keyword id="KW-0597">Phosphoprotein</keyword>
<keyword id="KW-0653">Protein transport</keyword>
<keyword id="KW-1185">Reference proteome</keyword>
<keyword id="KW-0811">Translocation</keyword>
<keyword id="KW-0813">Transport</keyword>
<keyword id="KW-0862">Zinc</keyword>
<name>TIM13_MOUSE</name>
<accession>P62075</accession>
<accession>Q91VM6</accession>
<accession>Q9DC89</accession>
<accession>Q9UHL8</accession>
<accession>Q9WTL1</accession>
<reference key="1">
    <citation type="journal article" date="1999" name="FEBS Lett.">
        <title>The mitochondrial TIM22 preprotein translocase is highly conserved throughout the eukaryotic kingdom.</title>
        <authorList>
            <person name="Bauer M.F."/>
            <person name="Rothbauer U."/>
            <person name="Muehlenbein N."/>
            <person name="Smith R.J.H."/>
            <person name="Gerbitz K.-D."/>
            <person name="Neupert W."/>
            <person name="Brunner M."/>
            <person name="Hofmann S."/>
        </authorList>
    </citation>
    <scope>NUCLEOTIDE SEQUENCE [MRNA]</scope>
</reference>
<reference key="2">
    <citation type="journal article" date="2005" name="Science">
        <title>The transcriptional landscape of the mammalian genome.</title>
        <authorList>
            <person name="Carninci P."/>
            <person name="Kasukawa T."/>
            <person name="Katayama S."/>
            <person name="Gough J."/>
            <person name="Frith M.C."/>
            <person name="Maeda N."/>
            <person name="Oyama R."/>
            <person name="Ravasi T."/>
            <person name="Lenhard B."/>
            <person name="Wells C."/>
            <person name="Kodzius R."/>
            <person name="Shimokawa K."/>
            <person name="Bajic V.B."/>
            <person name="Brenner S.E."/>
            <person name="Batalov S."/>
            <person name="Forrest A.R."/>
            <person name="Zavolan M."/>
            <person name="Davis M.J."/>
            <person name="Wilming L.G."/>
            <person name="Aidinis V."/>
            <person name="Allen J.E."/>
            <person name="Ambesi-Impiombato A."/>
            <person name="Apweiler R."/>
            <person name="Aturaliya R.N."/>
            <person name="Bailey T.L."/>
            <person name="Bansal M."/>
            <person name="Baxter L."/>
            <person name="Beisel K.W."/>
            <person name="Bersano T."/>
            <person name="Bono H."/>
            <person name="Chalk A.M."/>
            <person name="Chiu K.P."/>
            <person name="Choudhary V."/>
            <person name="Christoffels A."/>
            <person name="Clutterbuck D.R."/>
            <person name="Crowe M.L."/>
            <person name="Dalla E."/>
            <person name="Dalrymple B.P."/>
            <person name="de Bono B."/>
            <person name="Della Gatta G."/>
            <person name="di Bernardo D."/>
            <person name="Down T."/>
            <person name="Engstrom P."/>
            <person name="Fagiolini M."/>
            <person name="Faulkner G."/>
            <person name="Fletcher C.F."/>
            <person name="Fukushima T."/>
            <person name="Furuno M."/>
            <person name="Futaki S."/>
            <person name="Gariboldi M."/>
            <person name="Georgii-Hemming P."/>
            <person name="Gingeras T.R."/>
            <person name="Gojobori T."/>
            <person name="Green R.E."/>
            <person name="Gustincich S."/>
            <person name="Harbers M."/>
            <person name="Hayashi Y."/>
            <person name="Hensch T.K."/>
            <person name="Hirokawa N."/>
            <person name="Hill D."/>
            <person name="Huminiecki L."/>
            <person name="Iacono M."/>
            <person name="Ikeo K."/>
            <person name="Iwama A."/>
            <person name="Ishikawa T."/>
            <person name="Jakt M."/>
            <person name="Kanapin A."/>
            <person name="Katoh M."/>
            <person name="Kawasawa Y."/>
            <person name="Kelso J."/>
            <person name="Kitamura H."/>
            <person name="Kitano H."/>
            <person name="Kollias G."/>
            <person name="Krishnan S.P."/>
            <person name="Kruger A."/>
            <person name="Kummerfeld S.K."/>
            <person name="Kurochkin I.V."/>
            <person name="Lareau L.F."/>
            <person name="Lazarevic D."/>
            <person name="Lipovich L."/>
            <person name="Liu J."/>
            <person name="Liuni S."/>
            <person name="McWilliam S."/>
            <person name="Madan Babu M."/>
            <person name="Madera M."/>
            <person name="Marchionni L."/>
            <person name="Matsuda H."/>
            <person name="Matsuzawa S."/>
            <person name="Miki H."/>
            <person name="Mignone F."/>
            <person name="Miyake S."/>
            <person name="Morris K."/>
            <person name="Mottagui-Tabar S."/>
            <person name="Mulder N."/>
            <person name="Nakano N."/>
            <person name="Nakauchi H."/>
            <person name="Ng P."/>
            <person name="Nilsson R."/>
            <person name="Nishiguchi S."/>
            <person name="Nishikawa S."/>
            <person name="Nori F."/>
            <person name="Ohara O."/>
            <person name="Okazaki Y."/>
            <person name="Orlando V."/>
            <person name="Pang K.C."/>
            <person name="Pavan W.J."/>
            <person name="Pavesi G."/>
            <person name="Pesole G."/>
            <person name="Petrovsky N."/>
            <person name="Piazza S."/>
            <person name="Reed J."/>
            <person name="Reid J.F."/>
            <person name="Ring B.Z."/>
            <person name="Ringwald M."/>
            <person name="Rost B."/>
            <person name="Ruan Y."/>
            <person name="Salzberg S.L."/>
            <person name="Sandelin A."/>
            <person name="Schneider C."/>
            <person name="Schoenbach C."/>
            <person name="Sekiguchi K."/>
            <person name="Semple C.A."/>
            <person name="Seno S."/>
            <person name="Sessa L."/>
            <person name="Sheng Y."/>
            <person name="Shibata Y."/>
            <person name="Shimada H."/>
            <person name="Shimada K."/>
            <person name="Silva D."/>
            <person name="Sinclair B."/>
            <person name="Sperling S."/>
            <person name="Stupka E."/>
            <person name="Sugiura K."/>
            <person name="Sultana R."/>
            <person name="Takenaka Y."/>
            <person name="Taki K."/>
            <person name="Tammoja K."/>
            <person name="Tan S.L."/>
            <person name="Tang S."/>
            <person name="Taylor M.S."/>
            <person name="Tegner J."/>
            <person name="Teichmann S.A."/>
            <person name="Ueda H.R."/>
            <person name="van Nimwegen E."/>
            <person name="Verardo R."/>
            <person name="Wei C.L."/>
            <person name="Yagi K."/>
            <person name="Yamanishi H."/>
            <person name="Zabarovsky E."/>
            <person name="Zhu S."/>
            <person name="Zimmer A."/>
            <person name="Hide W."/>
            <person name="Bult C."/>
            <person name="Grimmond S.M."/>
            <person name="Teasdale R.D."/>
            <person name="Liu E.T."/>
            <person name="Brusic V."/>
            <person name="Quackenbush J."/>
            <person name="Wahlestedt C."/>
            <person name="Mattick J.S."/>
            <person name="Hume D.A."/>
            <person name="Kai C."/>
            <person name="Sasaki D."/>
            <person name="Tomaru Y."/>
            <person name="Fukuda S."/>
            <person name="Kanamori-Katayama M."/>
            <person name="Suzuki M."/>
            <person name="Aoki J."/>
            <person name="Arakawa T."/>
            <person name="Iida J."/>
            <person name="Imamura K."/>
            <person name="Itoh M."/>
            <person name="Kato T."/>
            <person name="Kawaji H."/>
            <person name="Kawagashira N."/>
            <person name="Kawashima T."/>
            <person name="Kojima M."/>
            <person name="Kondo S."/>
            <person name="Konno H."/>
            <person name="Nakano K."/>
            <person name="Ninomiya N."/>
            <person name="Nishio T."/>
            <person name="Okada M."/>
            <person name="Plessy C."/>
            <person name="Shibata K."/>
            <person name="Shiraki T."/>
            <person name="Suzuki S."/>
            <person name="Tagami M."/>
            <person name="Waki K."/>
            <person name="Watahiki A."/>
            <person name="Okamura-Oho Y."/>
            <person name="Suzuki H."/>
            <person name="Kawai J."/>
            <person name="Hayashizaki Y."/>
        </authorList>
    </citation>
    <scope>NUCLEOTIDE SEQUENCE [LARGE SCALE MRNA]</scope>
    <source>
        <strain>C57BL/6J</strain>
        <strain>NOD</strain>
        <tissue>Brain</tissue>
        <tissue>Thymus</tissue>
        <tissue>Tongue</tissue>
    </source>
</reference>
<reference key="3">
    <citation type="journal article" date="2004" name="Genome Res.">
        <title>The status, quality, and expansion of the NIH full-length cDNA project: the Mammalian Gene Collection (MGC).</title>
        <authorList>
            <consortium name="The MGC Project Team"/>
        </authorList>
    </citation>
    <scope>NUCLEOTIDE SEQUENCE [LARGE SCALE MRNA]</scope>
    <source>
        <tissue>Mammary tumor</tissue>
    </source>
</reference>
<reference key="4">
    <citation type="submission" date="2007-04" db="UniProtKB">
        <authorList>
            <person name="Lubec G."/>
            <person name="Kang S.U."/>
        </authorList>
    </citation>
    <scope>PROTEIN SEQUENCE OF 28-41 AND 50-64</scope>
    <scope>IDENTIFICATION BY MASS SPECTROMETRY</scope>
    <source>
        <strain>C57BL/6J</strain>
        <tissue>Brain</tissue>
    </source>
</reference>
<reference key="5">
    <citation type="journal article" date="2004" name="Hum. Mol. Genet.">
        <title>The calcium-binding aspartate/glutamate carriers, citrin and aralar1, are new substrates for the DDP1/TIMM8a-TIMM13 complex.</title>
        <authorList>
            <person name="Roesch K."/>
            <person name="Hynds P.J."/>
            <person name="Varga R."/>
            <person name="Tranebjaerg L."/>
            <person name="Koehler C.M."/>
        </authorList>
    </citation>
    <scope>TISSUE SPECIFICITY</scope>
</reference>
<reference key="6">
    <citation type="journal article" date="2010" name="Cell">
        <title>A tissue-specific atlas of mouse protein phosphorylation and expression.</title>
        <authorList>
            <person name="Huttlin E.L."/>
            <person name="Jedrychowski M.P."/>
            <person name="Elias J.E."/>
            <person name="Goswami T."/>
            <person name="Rad R."/>
            <person name="Beausoleil S.A."/>
            <person name="Villen J."/>
            <person name="Haas W."/>
            <person name="Sowa M.E."/>
            <person name="Gygi S.P."/>
        </authorList>
    </citation>
    <scope>IDENTIFICATION BY MASS SPECTROMETRY [LARGE SCALE ANALYSIS]</scope>
    <source>
        <tissue>Brain</tissue>
        <tissue>Brown adipose tissue</tissue>
        <tissue>Heart</tissue>
        <tissue>Kidney</tissue>
        <tissue>Liver</tissue>
        <tissue>Lung</tissue>
        <tissue>Pancreas</tissue>
        <tissue>Spleen</tissue>
        <tissue>Testis</tissue>
    </source>
</reference>
<reference key="7">
    <citation type="journal article" date="2013" name="Mol. Cell">
        <title>SIRT5-mediated lysine desuccinylation impacts diverse metabolic pathways.</title>
        <authorList>
            <person name="Park J."/>
            <person name="Chen Y."/>
            <person name="Tishkoff D.X."/>
            <person name="Peng C."/>
            <person name="Tan M."/>
            <person name="Dai L."/>
            <person name="Xie Z."/>
            <person name="Zhang Y."/>
            <person name="Zwaans B.M."/>
            <person name="Skinner M.E."/>
            <person name="Lombard D.B."/>
            <person name="Zhao Y."/>
        </authorList>
    </citation>
    <scope>SUCCINYLATION [LARGE SCALE ANALYSIS] AT LYS-53</scope>
    <scope>IDENTIFICATION BY MASS SPECTROMETRY [LARGE SCALE ANALYSIS]</scope>
    <source>
        <tissue>Liver</tissue>
    </source>
</reference>
<protein>
    <recommendedName>
        <fullName>Mitochondrial import inner membrane translocase subunit Tim13</fullName>
    </recommendedName>
</protein>
<dbReference type="EMBL" id="AF144702">
    <property type="protein sequence ID" value="AAD39953.1"/>
    <property type="molecule type" value="mRNA"/>
</dbReference>
<dbReference type="EMBL" id="AK003054">
    <property type="protein sequence ID" value="BAB22536.1"/>
    <property type="molecule type" value="mRNA"/>
</dbReference>
<dbReference type="EMBL" id="AK009041">
    <property type="protein sequence ID" value="BAB26042.1"/>
    <property type="molecule type" value="mRNA"/>
</dbReference>
<dbReference type="EMBL" id="AK009152">
    <property type="protein sequence ID" value="BAB26109.1"/>
    <property type="molecule type" value="mRNA"/>
</dbReference>
<dbReference type="EMBL" id="AK013230">
    <property type="protein sequence ID" value="BAB28728.1"/>
    <property type="molecule type" value="mRNA"/>
</dbReference>
<dbReference type="EMBL" id="AK088984">
    <property type="protein sequence ID" value="BAC40687.1"/>
    <property type="molecule type" value="mRNA"/>
</dbReference>
<dbReference type="EMBL" id="BC011436">
    <property type="protein sequence ID" value="AAH11436.1"/>
    <property type="molecule type" value="mRNA"/>
</dbReference>
<dbReference type="CCDS" id="CCDS35989.1"/>
<dbReference type="RefSeq" id="NP_038923.1">
    <property type="nucleotide sequence ID" value="NM_013895.4"/>
</dbReference>
<dbReference type="SMR" id="P62075"/>
<dbReference type="BioGRID" id="205957">
    <property type="interactions" value="9"/>
</dbReference>
<dbReference type="FunCoup" id="P62075">
    <property type="interactions" value="2613"/>
</dbReference>
<dbReference type="IntAct" id="P62075">
    <property type="interactions" value="3"/>
</dbReference>
<dbReference type="MINT" id="P62075"/>
<dbReference type="STRING" id="10090.ENSMUSP00000020440"/>
<dbReference type="iPTMnet" id="P62075"/>
<dbReference type="PhosphoSitePlus" id="P62075"/>
<dbReference type="SwissPalm" id="P62075"/>
<dbReference type="jPOST" id="P62075"/>
<dbReference type="PaxDb" id="10090-ENSMUSP00000020440"/>
<dbReference type="PeptideAtlas" id="P62075"/>
<dbReference type="ProteomicsDB" id="259452"/>
<dbReference type="Pumba" id="P62075"/>
<dbReference type="Antibodypedia" id="23013">
    <property type="antibodies" value="50 antibodies from 17 providers"/>
</dbReference>
<dbReference type="DNASU" id="30055"/>
<dbReference type="Ensembl" id="ENSMUST00000020440.7">
    <property type="protein sequence ID" value="ENSMUSP00000020440.7"/>
    <property type="gene ID" value="ENSMUSG00000020219.8"/>
</dbReference>
<dbReference type="GeneID" id="30055"/>
<dbReference type="KEGG" id="mmu:30055"/>
<dbReference type="UCSC" id="uc007gfi.2">
    <property type="organism name" value="mouse"/>
</dbReference>
<dbReference type="AGR" id="MGI:1353432"/>
<dbReference type="CTD" id="26517"/>
<dbReference type="MGI" id="MGI:1353432">
    <property type="gene designation" value="Timm13"/>
</dbReference>
<dbReference type="VEuPathDB" id="HostDB:ENSMUSG00000020219"/>
<dbReference type="eggNOG" id="KOG1733">
    <property type="taxonomic scope" value="Eukaryota"/>
</dbReference>
<dbReference type="GeneTree" id="ENSGT00390000014000"/>
<dbReference type="HOGENOM" id="CLU_141397_0_2_1"/>
<dbReference type="InParanoid" id="P62075"/>
<dbReference type="OMA" id="MAAWNQV"/>
<dbReference type="OrthoDB" id="7813104at2759"/>
<dbReference type="PhylomeDB" id="P62075"/>
<dbReference type="TreeFam" id="TF106194"/>
<dbReference type="BioGRID-ORCS" id="30055">
    <property type="hits" value="29 hits in 81 CRISPR screens"/>
</dbReference>
<dbReference type="CD-CODE" id="CE726F99">
    <property type="entry name" value="Postsynaptic density"/>
</dbReference>
<dbReference type="ChiTaRS" id="Timm13">
    <property type="organism name" value="mouse"/>
</dbReference>
<dbReference type="PRO" id="PR:P62075"/>
<dbReference type="Proteomes" id="UP000000589">
    <property type="component" value="Chromosome 10"/>
</dbReference>
<dbReference type="RNAct" id="P62075">
    <property type="molecule type" value="protein"/>
</dbReference>
<dbReference type="Bgee" id="ENSMUSG00000020219">
    <property type="expression patterns" value="Expressed in yolk sac and 71 other cell types or tissues"/>
</dbReference>
<dbReference type="ExpressionAtlas" id="P62075">
    <property type="expression patterns" value="baseline and differential"/>
</dbReference>
<dbReference type="GO" id="GO:0001650">
    <property type="term" value="C:fibrillar center"/>
    <property type="evidence" value="ECO:0007669"/>
    <property type="project" value="Ensembl"/>
</dbReference>
<dbReference type="GO" id="GO:0005743">
    <property type="term" value="C:mitochondrial inner membrane"/>
    <property type="evidence" value="ECO:0007669"/>
    <property type="project" value="UniProtKB-SubCell"/>
</dbReference>
<dbReference type="GO" id="GO:0042719">
    <property type="term" value="C:mitochondrial intermembrane space protein transporter complex"/>
    <property type="evidence" value="ECO:0007669"/>
    <property type="project" value="Ensembl"/>
</dbReference>
<dbReference type="GO" id="GO:0005739">
    <property type="term" value="C:mitochondrion"/>
    <property type="evidence" value="ECO:0007005"/>
    <property type="project" value="MGI"/>
</dbReference>
<dbReference type="GO" id="GO:0046872">
    <property type="term" value="F:metal ion binding"/>
    <property type="evidence" value="ECO:0007669"/>
    <property type="project" value="UniProtKB-KW"/>
</dbReference>
<dbReference type="GO" id="GO:0045039">
    <property type="term" value="P:protein insertion into mitochondrial inner membrane"/>
    <property type="evidence" value="ECO:0007669"/>
    <property type="project" value="Ensembl"/>
</dbReference>
<dbReference type="FunFam" id="1.10.287.810:FF:000001">
    <property type="entry name" value="mitochondrial import inner membrane translocase subunit TIM13"/>
    <property type="match status" value="1"/>
</dbReference>
<dbReference type="Gene3D" id="1.10.287.810">
    <property type="entry name" value="Mitochondrial import inner membrane translocase subunit tim13 like domains"/>
    <property type="match status" value="1"/>
</dbReference>
<dbReference type="InterPro" id="IPR004217">
    <property type="entry name" value="Tim10-like"/>
</dbReference>
<dbReference type="InterPro" id="IPR035427">
    <property type="entry name" value="Tim10-like_dom_sf"/>
</dbReference>
<dbReference type="Pfam" id="PF02953">
    <property type="entry name" value="zf-Tim10_DDP"/>
    <property type="match status" value="1"/>
</dbReference>
<dbReference type="SUPFAM" id="SSF144122">
    <property type="entry name" value="Tim10-like"/>
    <property type="match status" value="1"/>
</dbReference>
<sequence>MDSGFGSDFGGTGGGKLDPGAIMEQVKVQIAVANAQELLQRMTDKCFRKCIGKPGGSLDNSEQKCIAMCMDRYMDAWNTVSRAYNSRLQRERANM</sequence>
<feature type="chain" id="PRO_0000193624" description="Mitochondrial import inner membrane translocase subunit Tim13">
    <location>
        <begin position="1"/>
        <end position="95"/>
    </location>
</feature>
<feature type="short sequence motif" description="Twin CX3C motif">
    <location>
        <begin position="46"/>
        <end position="69"/>
    </location>
</feature>
<feature type="modified residue" description="N-acetylmethionine" evidence="2">
    <location>
        <position position="1"/>
    </location>
</feature>
<feature type="modified residue" description="Phosphoserine" evidence="2">
    <location>
        <position position="7"/>
    </location>
</feature>
<feature type="modified residue" description="N6-succinyllysine" evidence="5">
    <location>
        <position position="53"/>
    </location>
</feature>
<feature type="disulfide bond" evidence="1">
    <location>
        <begin position="46"/>
        <end position="69"/>
    </location>
</feature>
<feature type="disulfide bond" evidence="1">
    <location>
        <begin position="50"/>
        <end position="65"/>
    </location>
</feature>
<feature type="sequence conflict" description="In Ref. 2; BAB22536." evidence="4" ref="2">
    <original>S</original>
    <variation>G</variation>
    <location>
        <position position="3"/>
    </location>
</feature>
<feature type="sequence conflict" description="In Ref. 3; AAH11436." evidence="4" ref="3">
    <original>D</original>
    <variation>S</variation>
    <location>
        <position position="18"/>
    </location>
</feature>